<protein>
    <recommendedName>
        <fullName evidence="1">Acetyl-coenzyme A carboxylase carboxyl transferase subunit beta</fullName>
        <shortName evidence="1">ACCase subunit beta</shortName>
        <shortName evidence="1">Acetyl-CoA carboxylase carboxyltransferase subunit beta</shortName>
        <ecNumber evidence="1">2.1.3.15</ecNumber>
    </recommendedName>
</protein>
<reference key="1">
    <citation type="submission" date="2007-10" db="EMBL/GenBank/DDBJ databases">
        <title>Complete genome of Alkaliphilus oremlandii OhILAs.</title>
        <authorList>
            <person name="Copeland A."/>
            <person name="Lucas S."/>
            <person name="Lapidus A."/>
            <person name="Barry K."/>
            <person name="Detter J.C."/>
            <person name="Glavina del Rio T."/>
            <person name="Hammon N."/>
            <person name="Israni S."/>
            <person name="Dalin E."/>
            <person name="Tice H."/>
            <person name="Pitluck S."/>
            <person name="Chain P."/>
            <person name="Malfatti S."/>
            <person name="Shin M."/>
            <person name="Vergez L."/>
            <person name="Schmutz J."/>
            <person name="Larimer F."/>
            <person name="Land M."/>
            <person name="Hauser L."/>
            <person name="Kyrpides N."/>
            <person name="Mikhailova N."/>
            <person name="Stolz J.F."/>
            <person name="Dawson A."/>
            <person name="Fisher E."/>
            <person name="Crable B."/>
            <person name="Perera E."/>
            <person name="Lisak J."/>
            <person name="Ranganathan M."/>
            <person name="Basu P."/>
            <person name="Richardson P."/>
        </authorList>
    </citation>
    <scope>NUCLEOTIDE SEQUENCE [LARGE SCALE GENOMIC DNA]</scope>
    <source>
        <strain>OhILAs</strain>
    </source>
</reference>
<organism>
    <name type="scientific">Alkaliphilus oremlandii (strain OhILAs)</name>
    <name type="common">Clostridium oremlandii (strain OhILAs)</name>
    <dbReference type="NCBI Taxonomy" id="350688"/>
    <lineage>
        <taxon>Bacteria</taxon>
        <taxon>Bacillati</taxon>
        <taxon>Bacillota</taxon>
        <taxon>Clostridia</taxon>
        <taxon>Peptostreptococcales</taxon>
        <taxon>Natronincolaceae</taxon>
        <taxon>Alkaliphilus</taxon>
    </lineage>
</organism>
<proteinExistence type="inferred from homology"/>
<keyword id="KW-0067">ATP-binding</keyword>
<keyword id="KW-0963">Cytoplasm</keyword>
<keyword id="KW-0275">Fatty acid biosynthesis</keyword>
<keyword id="KW-0276">Fatty acid metabolism</keyword>
<keyword id="KW-0444">Lipid biosynthesis</keyword>
<keyword id="KW-0443">Lipid metabolism</keyword>
<keyword id="KW-0547">Nucleotide-binding</keyword>
<keyword id="KW-1185">Reference proteome</keyword>
<keyword id="KW-0808">Transferase</keyword>
<name>ACCD_ALKOO</name>
<evidence type="ECO:0000255" key="1">
    <source>
        <dbReference type="HAMAP-Rule" id="MF_01395"/>
    </source>
</evidence>
<evidence type="ECO:0000255" key="2">
    <source>
        <dbReference type="PROSITE-ProRule" id="PRU01136"/>
    </source>
</evidence>
<evidence type="ECO:0000256" key="3">
    <source>
        <dbReference type="SAM" id="MobiDB-lite"/>
    </source>
</evidence>
<feature type="chain" id="PRO_0000389664" description="Acetyl-coenzyme A carboxylase carboxyl transferase subunit beta">
    <location>
        <begin position="1"/>
        <end position="275"/>
    </location>
</feature>
<feature type="domain" description="CoA carboxyltransferase N-terminal" evidence="2">
    <location>
        <begin position="18"/>
        <end position="275"/>
    </location>
</feature>
<feature type="region of interest" description="Disordered" evidence="3">
    <location>
        <begin position="23"/>
        <end position="47"/>
    </location>
</feature>
<feature type="compositionally biased region" description="Polar residues" evidence="3">
    <location>
        <begin position="26"/>
        <end position="38"/>
    </location>
</feature>
<gene>
    <name evidence="1" type="primary">accD</name>
    <name type="ordered locus">Clos_0396</name>
</gene>
<dbReference type="EC" id="2.1.3.15" evidence="1"/>
<dbReference type="EMBL" id="CP000853">
    <property type="protein sequence ID" value="ABW17958.1"/>
    <property type="molecule type" value="Genomic_DNA"/>
</dbReference>
<dbReference type="RefSeq" id="WP_012158273.1">
    <property type="nucleotide sequence ID" value="NC_009922.1"/>
</dbReference>
<dbReference type="SMR" id="A8MLP1"/>
<dbReference type="STRING" id="350688.Clos_0396"/>
<dbReference type="KEGG" id="aoe:Clos_0396"/>
<dbReference type="eggNOG" id="COG0777">
    <property type="taxonomic scope" value="Bacteria"/>
</dbReference>
<dbReference type="HOGENOM" id="CLU_015486_1_1_9"/>
<dbReference type="OrthoDB" id="9772975at2"/>
<dbReference type="UniPathway" id="UPA00655">
    <property type="reaction ID" value="UER00711"/>
</dbReference>
<dbReference type="Proteomes" id="UP000000269">
    <property type="component" value="Chromosome"/>
</dbReference>
<dbReference type="GO" id="GO:0009317">
    <property type="term" value="C:acetyl-CoA carboxylase complex"/>
    <property type="evidence" value="ECO:0007669"/>
    <property type="project" value="InterPro"/>
</dbReference>
<dbReference type="GO" id="GO:0003989">
    <property type="term" value="F:acetyl-CoA carboxylase activity"/>
    <property type="evidence" value="ECO:0007669"/>
    <property type="project" value="InterPro"/>
</dbReference>
<dbReference type="GO" id="GO:0005524">
    <property type="term" value="F:ATP binding"/>
    <property type="evidence" value="ECO:0007669"/>
    <property type="project" value="UniProtKB-KW"/>
</dbReference>
<dbReference type="GO" id="GO:0016743">
    <property type="term" value="F:carboxyl- or carbamoyltransferase activity"/>
    <property type="evidence" value="ECO:0007669"/>
    <property type="project" value="UniProtKB-UniRule"/>
</dbReference>
<dbReference type="GO" id="GO:0006633">
    <property type="term" value="P:fatty acid biosynthetic process"/>
    <property type="evidence" value="ECO:0007669"/>
    <property type="project" value="UniProtKB-KW"/>
</dbReference>
<dbReference type="GO" id="GO:2001295">
    <property type="term" value="P:malonyl-CoA biosynthetic process"/>
    <property type="evidence" value="ECO:0007669"/>
    <property type="project" value="UniProtKB-UniRule"/>
</dbReference>
<dbReference type="Gene3D" id="3.90.226.10">
    <property type="entry name" value="2-enoyl-CoA Hydratase, Chain A, domain 1"/>
    <property type="match status" value="1"/>
</dbReference>
<dbReference type="HAMAP" id="MF_01395">
    <property type="entry name" value="AcetylCoA_CT_beta"/>
    <property type="match status" value="1"/>
</dbReference>
<dbReference type="InterPro" id="IPR034733">
    <property type="entry name" value="AcCoA_carboxyl_beta"/>
</dbReference>
<dbReference type="InterPro" id="IPR000438">
    <property type="entry name" value="Acetyl_CoA_COase_Trfase_b_su"/>
</dbReference>
<dbReference type="InterPro" id="IPR029045">
    <property type="entry name" value="ClpP/crotonase-like_dom_sf"/>
</dbReference>
<dbReference type="InterPro" id="IPR011762">
    <property type="entry name" value="COA_CT_N"/>
</dbReference>
<dbReference type="NCBIfam" id="TIGR00515">
    <property type="entry name" value="accD"/>
    <property type="match status" value="1"/>
</dbReference>
<dbReference type="PANTHER" id="PTHR42995">
    <property type="entry name" value="ACETYL-COENZYME A CARBOXYLASE CARBOXYL TRANSFERASE SUBUNIT BETA, CHLOROPLASTIC"/>
    <property type="match status" value="1"/>
</dbReference>
<dbReference type="PANTHER" id="PTHR42995:SF5">
    <property type="entry name" value="ACETYL-COENZYME A CARBOXYLASE CARBOXYL TRANSFERASE SUBUNIT BETA, CHLOROPLASTIC"/>
    <property type="match status" value="1"/>
</dbReference>
<dbReference type="Pfam" id="PF01039">
    <property type="entry name" value="Carboxyl_trans"/>
    <property type="match status" value="1"/>
</dbReference>
<dbReference type="PRINTS" id="PR01070">
    <property type="entry name" value="ACCCTRFRASEB"/>
</dbReference>
<dbReference type="SUPFAM" id="SSF52096">
    <property type="entry name" value="ClpP/crotonase"/>
    <property type="match status" value="1"/>
</dbReference>
<dbReference type="PROSITE" id="PS50980">
    <property type="entry name" value="COA_CT_NTER"/>
    <property type="match status" value="1"/>
</dbReference>
<comment type="function">
    <text evidence="1">Component of the acetyl coenzyme A carboxylase (ACC) complex. Biotin carboxylase (BC) catalyzes the carboxylation of biotin on its carrier protein (BCCP) and then the CO(2) group is transferred by the transcarboxylase to acetyl-CoA to form malonyl-CoA.</text>
</comment>
<comment type="catalytic activity">
    <reaction evidence="1">
        <text>N(6)-carboxybiotinyl-L-lysyl-[protein] + acetyl-CoA = N(6)-biotinyl-L-lysyl-[protein] + malonyl-CoA</text>
        <dbReference type="Rhea" id="RHEA:54728"/>
        <dbReference type="Rhea" id="RHEA-COMP:10505"/>
        <dbReference type="Rhea" id="RHEA-COMP:10506"/>
        <dbReference type="ChEBI" id="CHEBI:57288"/>
        <dbReference type="ChEBI" id="CHEBI:57384"/>
        <dbReference type="ChEBI" id="CHEBI:83144"/>
        <dbReference type="ChEBI" id="CHEBI:83145"/>
        <dbReference type="EC" id="2.1.3.15"/>
    </reaction>
</comment>
<comment type="pathway">
    <text evidence="1">Lipid metabolism; malonyl-CoA biosynthesis; malonyl-CoA from acetyl-CoA: step 1/1.</text>
</comment>
<comment type="subunit">
    <text evidence="1">Acetyl-CoA carboxylase is a heterohexamer composed of biotin carboxyl carrier protein (AccB), biotin carboxylase (AccC) and two subunits each of ACCase subunit alpha (AccA) and ACCase subunit beta (AccD).</text>
</comment>
<comment type="subcellular location">
    <subcellularLocation>
        <location evidence="1">Cytoplasm</location>
    </subcellularLocation>
</comment>
<comment type="similarity">
    <text evidence="1">Belongs to the AccD/PCCB family.</text>
</comment>
<sequence length="275" mass="29802">MLKDIFGKKKYATITLYKDNAGPAVPSNTHSSKSNGNPVSEMKENKRMGARSRIAALIDKDTFIEYDSELESCNPLSFPKYAEKILAAMETSMEKDAVITGEGTIRGESCVLCVMNPDFMMGSMGSVVGEKITRAIEKAIEKKLPVIIFCASGGARMQEGILSLMQMAKTSAALGRLGEAGLLYISVLTDPTTGGVTASFAMLGDIIIAEPGALIGFAGPRVIEQTIRQKLPEGFQRSEFLLEKGFIDQIVSRKDMRNTLASLLRIHRLGGEMHA</sequence>
<accession>A8MLP1</accession>